<dbReference type="EMBL" id="AF083394">
    <property type="protein sequence ID" value="AAD23916.1"/>
    <property type="molecule type" value="mRNA"/>
</dbReference>
<dbReference type="EMBL" id="AK006414">
    <property type="protein sequence ID" value="BAB24576.1"/>
    <property type="molecule type" value="mRNA"/>
</dbReference>
<dbReference type="EMBL" id="BC048473">
    <property type="protein sequence ID" value="AAH48473.1"/>
    <property type="molecule type" value="mRNA"/>
</dbReference>
<dbReference type="CCDS" id="CCDS18009.1"/>
<dbReference type="RefSeq" id="NP_001342427.1">
    <property type="nucleotide sequence ID" value="NM_001355498.2"/>
</dbReference>
<dbReference type="RefSeq" id="NP_001366457.1">
    <property type="nucleotide sequence ID" value="NM_001379528.1"/>
</dbReference>
<dbReference type="RefSeq" id="NP_067293.1">
    <property type="nucleotide sequence ID" value="NM_021318.5"/>
</dbReference>
<dbReference type="RefSeq" id="XP_011248382.1">
    <property type="nucleotide sequence ID" value="XM_011250080.2"/>
</dbReference>
<dbReference type="SMR" id="Q9WTX7"/>
<dbReference type="BioGRID" id="208318">
    <property type="interactions" value="3"/>
</dbReference>
<dbReference type="CORUM" id="Q9WTX7"/>
<dbReference type="FunCoup" id="Q9WTX7">
    <property type="interactions" value="146"/>
</dbReference>
<dbReference type="IntAct" id="Q9WTX7">
    <property type="interactions" value="2"/>
</dbReference>
<dbReference type="MINT" id="Q9WTX7"/>
<dbReference type="STRING" id="10090.ENSMUSP00000103839"/>
<dbReference type="GlyGen" id="Q9WTX7">
    <property type="glycosylation" value="1 site"/>
</dbReference>
<dbReference type="iPTMnet" id="Q9WTX7"/>
<dbReference type="PhosphoSitePlus" id="Q9WTX7"/>
<dbReference type="SwissPalm" id="Q9WTX7"/>
<dbReference type="PaxDb" id="10090-ENSMUSP00000029922"/>
<dbReference type="ProteomicsDB" id="266843"/>
<dbReference type="Antibodypedia" id="31954">
    <property type="antibodies" value="165 antibodies from 24 providers"/>
</dbReference>
<dbReference type="DNASU" id="57756"/>
<dbReference type="Ensembl" id="ENSMUST00000029922.14">
    <property type="protein sequence ID" value="ENSMUSP00000029922.8"/>
    <property type="gene ID" value="ENSMUSG00000028259.14"/>
</dbReference>
<dbReference type="Ensembl" id="ENSMUST00000108204.2">
    <property type="protein sequence ID" value="ENSMUSP00000103839.2"/>
    <property type="gene ID" value="ENSMUSG00000028259.14"/>
</dbReference>
<dbReference type="GeneID" id="57756"/>
<dbReference type="KEGG" id="mmu:57756"/>
<dbReference type="UCSC" id="uc008sef.1">
    <property type="organism name" value="mouse"/>
</dbReference>
<dbReference type="AGR" id="MGI:1913192"/>
<dbReference type="CTD" id="9457"/>
<dbReference type="MGI" id="MGI:1913192">
    <property type="gene designation" value="Fhl5"/>
</dbReference>
<dbReference type="VEuPathDB" id="HostDB:ENSMUSG00000028259"/>
<dbReference type="eggNOG" id="KOG1704">
    <property type="taxonomic scope" value="Eukaryota"/>
</dbReference>
<dbReference type="GeneTree" id="ENSGT00950000183028"/>
<dbReference type="HOGENOM" id="CLU_001357_2_0_1"/>
<dbReference type="InParanoid" id="Q9WTX7"/>
<dbReference type="OMA" id="ERCFNCA"/>
<dbReference type="OrthoDB" id="274660at2759"/>
<dbReference type="PhylomeDB" id="Q9WTX7"/>
<dbReference type="TreeFam" id="TF314113"/>
<dbReference type="BioGRID-ORCS" id="57756">
    <property type="hits" value="0 hits in 77 CRISPR screens"/>
</dbReference>
<dbReference type="ChiTaRS" id="Fhl5">
    <property type="organism name" value="mouse"/>
</dbReference>
<dbReference type="PRO" id="PR:Q9WTX7"/>
<dbReference type="Proteomes" id="UP000000589">
    <property type="component" value="Chromosome 4"/>
</dbReference>
<dbReference type="RNAct" id="Q9WTX7">
    <property type="molecule type" value="protein"/>
</dbReference>
<dbReference type="Bgee" id="ENSMUSG00000028259">
    <property type="expression patterns" value="Expressed in seminiferous tubule of testis and 30 other cell types or tissues"/>
</dbReference>
<dbReference type="GO" id="GO:0005634">
    <property type="term" value="C:nucleus"/>
    <property type="evidence" value="ECO:0007669"/>
    <property type="project" value="UniProtKB-SubCell"/>
</dbReference>
<dbReference type="GO" id="GO:0003713">
    <property type="term" value="F:transcription coactivator activity"/>
    <property type="evidence" value="ECO:0000314"/>
    <property type="project" value="MGI"/>
</dbReference>
<dbReference type="GO" id="GO:0008270">
    <property type="term" value="F:zinc ion binding"/>
    <property type="evidence" value="ECO:0007669"/>
    <property type="project" value="UniProtKB-KW"/>
</dbReference>
<dbReference type="GO" id="GO:0006351">
    <property type="term" value="P:DNA-templated transcription"/>
    <property type="evidence" value="ECO:0000304"/>
    <property type="project" value="MGI"/>
</dbReference>
<dbReference type="GO" id="GO:0045944">
    <property type="term" value="P:positive regulation of transcription by RNA polymerase II"/>
    <property type="evidence" value="ECO:0000316"/>
    <property type="project" value="MGI"/>
</dbReference>
<dbReference type="CDD" id="cd09343">
    <property type="entry name" value="LIM1_FHL"/>
    <property type="match status" value="1"/>
</dbReference>
<dbReference type="CDD" id="cd09428">
    <property type="entry name" value="LIM2_FHL5"/>
    <property type="match status" value="1"/>
</dbReference>
<dbReference type="CDD" id="cd09347">
    <property type="entry name" value="LIM4_FHL"/>
    <property type="match status" value="1"/>
</dbReference>
<dbReference type="FunFam" id="2.10.110.10:FF:000013">
    <property type="entry name" value="Four and a half LIM domains 1"/>
    <property type="match status" value="1"/>
</dbReference>
<dbReference type="FunFam" id="2.10.110.10:FF:000030">
    <property type="entry name" value="Four and a half LIM domains protein 2"/>
    <property type="match status" value="1"/>
</dbReference>
<dbReference type="FunFam" id="2.10.110.10:FF:000048">
    <property type="entry name" value="Four and a half LIM domains protein 2"/>
    <property type="match status" value="1"/>
</dbReference>
<dbReference type="FunFam" id="2.10.110.10:FF:000049">
    <property type="entry name" value="Four and a half LIM domains protein 2"/>
    <property type="match status" value="1"/>
</dbReference>
<dbReference type="Gene3D" id="2.10.110.10">
    <property type="entry name" value="Cysteine Rich Protein"/>
    <property type="match status" value="5"/>
</dbReference>
<dbReference type="InterPro" id="IPR042947">
    <property type="entry name" value="FHL5_LIM2"/>
</dbReference>
<dbReference type="InterPro" id="IPR056807">
    <property type="entry name" value="LIM_FHL1/2/3/5_N"/>
</dbReference>
<dbReference type="InterPro" id="IPR001781">
    <property type="entry name" value="Znf_LIM"/>
</dbReference>
<dbReference type="PANTHER" id="PTHR24205">
    <property type="entry name" value="FOUR AND A HALF LIM DOMAINS PROTEIN"/>
    <property type="match status" value="1"/>
</dbReference>
<dbReference type="PANTHER" id="PTHR24205:SF7">
    <property type="entry name" value="FOUR AND A HALF LIM DOMAINS PROTEIN 5"/>
    <property type="match status" value="1"/>
</dbReference>
<dbReference type="Pfam" id="PF00412">
    <property type="entry name" value="LIM"/>
    <property type="match status" value="4"/>
</dbReference>
<dbReference type="Pfam" id="PF25076">
    <property type="entry name" value="LIM_FHL2-3_N"/>
    <property type="match status" value="1"/>
</dbReference>
<dbReference type="SMART" id="SM00132">
    <property type="entry name" value="LIM"/>
    <property type="match status" value="4"/>
</dbReference>
<dbReference type="SUPFAM" id="SSF57716">
    <property type="entry name" value="Glucocorticoid receptor-like (DNA-binding domain)"/>
    <property type="match status" value="5"/>
</dbReference>
<dbReference type="PROSITE" id="PS00478">
    <property type="entry name" value="LIM_DOMAIN_1"/>
    <property type="match status" value="4"/>
</dbReference>
<dbReference type="PROSITE" id="PS50023">
    <property type="entry name" value="LIM_DOMAIN_2"/>
    <property type="match status" value="4"/>
</dbReference>
<reference key="1">
    <citation type="journal article" date="1999" name="Nature">
        <title>CBP-independent activation of CREM and CREB by the LIM-only protein ACT.</title>
        <authorList>
            <person name="Fimia G.M."/>
            <person name="De Cesare D."/>
            <person name="Sassone-Corsi P."/>
        </authorList>
    </citation>
    <scope>NUCLEOTIDE SEQUENCE [MRNA]</scope>
    <scope>SUBCELLULAR LOCATION</scope>
    <scope>TISSUE SPECIFICITY</scope>
    <scope>INTERACTION WITH CREM</scope>
    <source>
        <tissue>Testis</tissue>
    </source>
</reference>
<reference key="2">
    <citation type="journal article" date="2005" name="Science">
        <title>The transcriptional landscape of the mammalian genome.</title>
        <authorList>
            <person name="Carninci P."/>
            <person name="Kasukawa T."/>
            <person name="Katayama S."/>
            <person name="Gough J."/>
            <person name="Frith M.C."/>
            <person name="Maeda N."/>
            <person name="Oyama R."/>
            <person name="Ravasi T."/>
            <person name="Lenhard B."/>
            <person name="Wells C."/>
            <person name="Kodzius R."/>
            <person name="Shimokawa K."/>
            <person name="Bajic V.B."/>
            <person name="Brenner S.E."/>
            <person name="Batalov S."/>
            <person name="Forrest A.R."/>
            <person name="Zavolan M."/>
            <person name="Davis M.J."/>
            <person name="Wilming L.G."/>
            <person name="Aidinis V."/>
            <person name="Allen J.E."/>
            <person name="Ambesi-Impiombato A."/>
            <person name="Apweiler R."/>
            <person name="Aturaliya R.N."/>
            <person name="Bailey T.L."/>
            <person name="Bansal M."/>
            <person name="Baxter L."/>
            <person name="Beisel K.W."/>
            <person name="Bersano T."/>
            <person name="Bono H."/>
            <person name="Chalk A.M."/>
            <person name="Chiu K.P."/>
            <person name="Choudhary V."/>
            <person name="Christoffels A."/>
            <person name="Clutterbuck D.R."/>
            <person name="Crowe M.L."/>
            <person name="Dalla E."/>
            <person name="Dalrymple B.P."/>
            <person name="de Bono B."/>
            <person name="Della Gatta G."/>
            <person name="di Bernardo D."/>
            <person name="Down T."/>
            <person name="Engstrom P."/>
            <person name="Fagiolini M."/>
            <person name="Faulkner G."/>
            <person name="Fletcher C.F."/>
            <person name="Fukushima T."/>
            <person name="Furuno M."/>
            <person name="Futaki S."/>
            <person name="Gariboldi M."/>
            <person name="Georgii-Hemming P."/>
            <person name="Gingeras T.R."/>
            <person name="Gojobori T."/>
            <person name="Green R.E."/>
            <person name="Gustincich S."/>
            <person name="Harbers M."/>
            <person name="Hayashi Y."/>
            <person name="Hensch T.K."/>
            <person name="Hirokawa N."/>
            <person name="Hill D."/>
            <person name="Huminiecki L."/>
            <person name="Iacono M."/>
            <person name="Ikeo K."/>
            <person name="Iwama A."/>
            <person name="Ishikawa T."/>
            <person name="Jakt M."/>
            <person name="Kanapin A."/>
            <person name="Katoh M."/>
            <person name="Kawasawa Y."/>
            <person name="Kelso J."/>
            <person name="Kitamura H."/>
            <person name="Kitano H."/>
            <person name="Kollias G."/>
            <person name="Krishnan S.P."/>
            <person name="Kruger A."/>
            <person name="Kummerfeld S.K."/>
            <person name="Kurochkin I.V."/>
            <person name="Lareau L.F."/>
            <person name="Lazarevic D."/>
            <person name="Lipovich L."/>
            <person name="Liu J."/>
            <person name="Liuni S."/>
            <person name="McWilliam S."/>
            <person name="Madan Babu M."/>
            <person name="Madera M."/>
            <person name="Marchionni L."/>
            <person name="Matsuda H."/>
            <person name="Matsuzawa S."/>
            <person name="Miki H."/>
            <person name="Mignone F."/>
            <person name="Miyake S."/>
            <person name="Morris K."/>
            <person name="Mottagui-Tabar S."/>
            <person name="Mulder N."/>
            <person name="Nakano N."/>
            <person name="Nakauchi H."/>
            <person name="Ng P."/>
            <person name="Nilsson R."/>
            <person name="Nishiguchi S."/>
            <person name="Nishikawa S."/>
            <person name="Nori F."/>
            <person name="Ohara O."/>
            <person name="Okazaki Y."/>
            <person name="Orlando V."/>
            <person name="Pang K.C."/>
            <person name="Pavan W.J."/>
            <person name="Pavesi G."/>
            <person name="Pesole G."/>
            <person name="Petrovsky N."/>
            <person name="Piazza S."/>
            <person name="Reed J."/>
            <person name="Reid J.F."/>
            <person name="Ring B.Z."/>
            <person name="Ringwald M."/>
            <person name="Rost B."/>
            <person name="Ruan Y."/>
            <person name="Salzberg S.L."/>
            <person name="Sandelin A."/>
            <person name="Schneider C."/>
            <person name="Schoenbach C."/>
            <person name="Sekiguchi K."/>
            <person name="Semple C.A."/>
            <person name="Seno S."/>
            <person name="Sessa L."/>
            <person name="Sheng Y."/>
            <person name="Shibata Y."/>
            <person name="Shimada H."/>
            <person name="Shimada K."/>
            <person name="Silva D."/>
            <person name="Sinclair B."/>
            <person name="Sperling S."/>
            <person name="Stupka E."/>
            <person name="Sugiura K."/>
            <person name="Sultana R."/>
            <person name="Takenaka Y."/>
            <person name="Taki K."/>
            <person name="Tammoja K."/>
            <person name="Tan S.L."/>
            <person name="Tang S."/>
            <person name="Taylor M.S."/>
            <person name="Tegner J."/>
            <person name="Teichmann S.A."/>
            <person name="Ueda H.R."/>
            <person name="van Nimwegen E."/>
            <person name="Verardo R."/>
            <person name="Wei C.L."/>
            <person name="Yagi K."/>
            <person name="Yamanishi H."/>
            <person name="Zabarovsky E."/>
            <person name="Zhu S."/>
            <person name="Zimmer A."/>
            <person name="Hide W."/>
            <person name="Bult C."/>
            <person name="Grimmond S.M."/>
            <person name="Teasdale R.D."/>
            <person name="Liu E.T."/>
            <person name="Brusic V."/>
            <person name="Quackenbush J."/>
            <person name="Wahlestedt C."/>
            <person name="Mattick J.S."/>
            <person name="Hume D.A."/>
            <person name="Kai C."/>
            <person name="Sasaki D."/>
            <person name="Tomaru Y."/>
            <person name="Fukuda S."/>
            <person name="Kanamori-Katayama M."/>
            <person name="Suzuki M."/>
            <person name="Aoki J."/>
            <person name="Arakawa T."/>
            <person name="Iida J."/>
            <person name="Imamura K."/>
            <person name="Itoh M."/>
            <person name="Kato T."/>
            <person name="Kawaji H."/>
            <person name="Kawagashira N."/>
            <person name="Kawashima T."/>
            <person name="Kojima M."/>
            <person name="Kondo S."/>
            <person name="Konno H."/>
            <person name="Nakano K."/>
            <person name="Ninomiya N."/>
            <person name="Nishio T."/>
            <person name="Okada M."/>
            <person name="Plessy C."/>
            <person name="Shibata K."/>
            <person name="Shiraki T."/>
            <person name="Suzuki S."/>
            <person name="Tagami M."/>
            <person name="Waki K."/>
            <person name="Watahiki A."/>
            <person name="Okamura-Oho Y."/>
            <person name="Suzuki H."/>
            <person name="Kawai J."/>
            <person name="Hayashizaki Y."/>
        </authorList>
    </citation>
    <scope>NUCLEOTIDE SEQUENCE [LARGE SCALE MRNA]</scope>
    <source>
        <strain>C57BL/6J</strain>
        <tissue>Testis</tissue>
    </source>
</reference>
<reference key="3">
    <citation type="journal article" date="2004" name="Genome Res.">
        <title>The status, quality, and expansion of the NIH full-length cDNA project: the Mammalian Gene Collection (MGC).</title>
        <authorList>
            <consortium name="The MGC Project Team"/>
        </authorList>
    </citation>
    <scope>NUCLEOTIDE SEQUENCE [LARGE SCALE MRNA]</scope>
    <source>
        <tissue>Testis</tissue>
    </source>
</reference>
<reference key="4">
    <citation type="journal article" date="2010" name="Cell">
        <title>A tissue-specific atlas of mouse protein phosphorylation and expression.</title>
        <authorList>
            <person name="Huttlin E.L."/>
            <person name="Jedrychowski M.P."/>
            <person name="Elias J.E."/>
            <person name="Goswami T."/>
            <person name="Rad R."/>
            <person name="Beausoleil S.A."/>
            <person name="Villen J."/>
            <person name="Haas W."/>
            <person name="Sowa M.E."/>
            <person name="Gygi S.P."/>
        </authorList>
    </citation>
    <scope>IDENTIFICATION BY MASS SPECTROMETRY [LARGE SCALE ANALYSIS]</scope>
    <source>
        <tissue>Testis</tissue>
    </source>
</reference>
<reference key="5">
    <citation type="journal article" date="2010" name="FEBS Lett.">
        <title>Sperm associated antigen 8 (SPAG8), a novel regulator of activator of CREM in testis during spermatogenesis.</title>
        <authorList>
            <person name="Wu H."/>
            <person name="Chen Y."/>
            <person name="Miao S."/>
            <person name="Zhang C."/>
            <person name="Zong S."/>
            <person name="Koide S.S."/>
            <person name="Wang L."/>
        </authorList>
    </citation>
    <scope>INTERACTION WITH SPAG8</scope>
</reference>
<comment type="function">
    <text evidence="1">May be involved in the regulation of spermatogenesis. Stimulates CREM transcriptional activity in a phosphorylation-independent manner (By similarity).</text>
</comment>
<comment type="subunit">
    <text evidence="4 5">Interacts with CREM (via the third LIM domain) (PubMed:10086359). Interacts (via second LIM domain) with SPAG8 (PubMed:20488182).</text>
</comment>
<comment type="interaction">
    <interactant intactId="EBI-7530396">
        <id>Q9WTX7</id>
    </interactant>
    <interactant intactId="EBI-7981981">
        <id>Q3V0Q6</id>
        <label>Spag8</label>
    </interactant>
    <organismsDiffer>false</organismsDiffer>
    <experiments>5</experiments>
</comment>
<comment type="subcellular location">
    <subcellularLocation>
        <location evidence="4">Nucleus</location>
    </subcellularLocation>
    <text>Nuclei of round and elongated spermatids.</text>
</comment>
<comment type="tissue specificity">
    <text evidence="4">Testis-specific, temporal expression is coordinated with CREM.</text>
</comment>
<feature type="chain" id="PRO_0000075743" description="Four and a half LIM domains protein 5">
    <location>
        <begin position="1"/>
        <end position="284"/>
    </location>
</feature>
<feature type="domain" description="LIM zinc-binding 1" evidence="3">
    <location>
        <begin position="39"/>
        <end position="100"/>
    </location>
</feature>
<feature type="domain" description="LIM zinc-binding 2" evidence="3">
    <location>
        <begin position="101"/>
        <end position="160"/>
    </location>
</feature>
<feature type="domain" description="LIM zinc-binding 3" evidence="3">
    <location>
        <begin position="161"/>
        <end position="220"/>
    </location>
</feature>
<feature type="zinc finger region" description="C4-type" evidence="2">
    <location>
        <begin position="8"/>
        <end position="32"/>
    </location>
</feature>
<keyword id="KW-0440">LIM domain</keyword>
<keyword id="KW-0479">Metal-binding</keyword>
<keyword id="KW-0539">Nucleus</keyword>
<keyword id="KW-1185">Reference proteome</keyword>
<keyword id="KW-0677">Repeat</keyword>
<keyword id="KW-0862">Zinc</keyword>
<keyword id="KW-0863">Zinc-finger</keyword>
<sequence>MTSSQFDCQYCTSSLIGKKYVLKDDNLYCISCYDRIFSNYCEQCKEPIESDSKDLCYKNRHWHEGCFRCNKCHHSLVEKPFVAKDDRLLCTDCYSNECSSKCFHCKRTIMPGSRKMEFKGNYWHETCFVCEHCRQPIGTKPLISKESGNYCVPCFEKEFAHYCNFCKKVITSGGITFRDQIWHKECFLCSGCRKELYEEAFMSKDDFPFCLDCYNHLYAKKCAACTKPITGLRGAKFICFQDRQWHSECFNCGKCSVSLVGEGFLTHNMEILCRKCGSGADTDA</sequence>
<accession>Q9WTX7</accession>
<proteinExistence type="evidence at protein level"/>
<name>FHL5_MOUSE</name>
<organism>
    <name type="scientific">Mus musculus</name>
    <name type="common">Mouse</name>
    <dbReference type="NCBI Taxonomy" id="10090"/>
    <lineage>
        <taxon>Eukaryota</taxon>
        <taxon>Metazoa</taxon>
        <taxon>Chordata</taxon>
        <taxon>Craniata</taxon>
        <taxon>Vertebrata</taxon>
        <taxon>Euteleostomi</taxon>
        <taxon>Mammalia</taxon>
        <taxon>Eutheria</taxon>
        <taxon>Euarchontoglires</taxon>
        <taxon>Glires</taxon>
        <taxon>Rodentia</taxon>
        <taxon>Myomorpha</taxon>
        <taxon>Muroidea</taxon>
        <taxon>Muridae</taxon>
        <taxon>Murinae</taxon>
        <taxon>Mus</taxon>
        <taxon>Mus</taxon>
    </lineage>
</organism>
<protein>
    <recommendedName>
        <fullName>Four and a half LIM domains protein 5</fullName>
        <shortName>FHL-5</shortName>
    </recommendedName>
    <alternativeName>
        <fullName>Activator of cAMP-responsive element modulator in testis</fullName>
        <shortName>Activator of CREM in testis</shortName>
    </alternativeName>
</protein>
<gene>
    <name type="primary">Fhl5</name>
    <name type="synonym">Act</name>
</gene>
<evidence type="ECO:0000250" key="1"/>
<evidence type="ECO:0000255" key="2"/>
<evidence type="ECO:0000255" key="3">
    <source>
        <dbReference type="PROSITE-ProRule" id="PRU00125"/>
    </source>
</evidence>
<evidence type="ECO:0000269" key="4">
    <source>
    </source>
</evidence>
<evidence type="ECO:0000269" key="5">
    <source>
    </source>
</evidence>